<name>RL27A_TENMO</name>
<organism>
    <name type="scientific">Tenebrio molitor</name>
    <name type="common">Yellow mealworm beetle</name>
    <dbReference type="NCBI Taxonomy" id="7067"/>
    <lineage>
        <taxon>Eukaryota</taxon>
        <taxon>Metazoa</taxon>
        <taxon>Ecdysozoa</taxon>
        <taxon>Arthropoda</taxon>
        <taxon>Hexapoda</taxon>
        <taxon>Insecta</taxon>
        <taxon>Pterygota</taxon>
        <taxon>Neoptera</taxon>
        <taxon>Endopterygota</taxon>
        <taxon>Coleoptera</taxon>
        <taxon>Polyphaga</taxon>
        <taxon>Cucujiformia</taxon>
        <taxon>Tenebrionidae</taxon>
        <taxon>Tenebrio</taxon>
    </lineage>
</organism>
<keyword id="KW-0687">Ribonucleoprotein</keyword>
<keyword id="KW-0689">Ribosomal protein</keyword>
<gene>
    <name type="primary">RpL27A</name>
</gene>
<accession>Q27021</accession>
<sequence>MSTHKKKTRKLRGHVSHGHGRIGKHRKHPGGRGNAGGMHHHRINFDKYHPGYFGKLGMRNYHLRRNSKWAPAINLDKLWTLVSEQTRSKYQNHPEGKAPVIDIVKAGYYKLLGKGACLTNLSLLKPSFSLNRLEDKIKAVGGACVLSA</sequence>
<comment type="similarity">
    <text evidence="2">Belongs to the universal ribosomal protein uL15 family.</text>
</comment>
<evidence type="ECO:0000256" key="1">
    <source>
        <dbReference type="SAM" id="MobiDB-lite"/>
    </source>
</evidence>
<evidence type="ECO:0000305" key="2"/>
<dbReference type="EMBL" id="X99204">
    <property type="protein sequence ID" value="CAA67590.1"/>
    <property type="molecule type" value="mRNA"/>
</dbReference>
<dbReference type="SMR" id="Q27021"/>
<dbReference type="GO" id="GO:0022625">
    <property type="term" value="C:cytosolic large ribosomal subunit"/>
    <property type="evidence" value="ECO:0007669"/>
    <property type="project" value="TreeGrafter"/>
</dbReference>
<dbReference type="GO" id="GO:0003735">
    <property type="term" value="F:structural constituent of ribosome"/>
    <property type="evidence" value="ECO:0007669"/>
    <property type="project" value="TreeGrafter"/>
</dbReference>
<dbReference type="Gene3D" id="3.100.10.10">
    <property type="match status" value="1"/>
</dbReference>
<dbReference type="InterPro" id="IPR021131">
    <property type="entry name" value="Ribosomal_uL15/eL18"/>
</dbReference>
<dbReference type="InterPro" id="IPR036227">
    <property type="entry name" value="Ribosomal_uL15/eL18_sf"/>
</dbReference>
<dbReference type="PANTHER" id="PTHR11721">
    <property type="entry name" value="60S RIBOSOMAL PROTEIN L27A"/>
    <property type="match status" value="1"/>
</dbReference>
<dbReference type="PANTHER" id="PTHR11721:SF3">
    <property type="entry name" value="LARGE RIBOSOMAL SUBUNIT PROTEIN UL15"/>
    <property type="match status" value="1"/>
</dbReference>
<dbReference type="Pfam" id="PF00828">
    <property type="entry name" value="Ribosomal_L27A"/>
    <property type="match status" value="1"/>
</dbReference>
<dbReference type="SUPFAM" id="SSF52080">
    <property type="entry name" value="Ribosomal proteins L15p and L18e"/>
    <property type="match status" value="1"/>
</dbReference>
<reference key="1">
    <citation type="submission" date="1996-07" db="EMBL/GenBank/DDBJ databases">
        <authorList>
            <person name="Mouillet J.F."/>
        </authorList>
    </citation>
    <scope>NUCLEOTIDE SEQUENCE [MRNA]</scope>
</reference>
<feature type="chain" id="PRO_0000104890" description="Large ribosomal subunit protein uL15">
    <location>
        <begin position="1"/>
        <end position="148"/>
    </location>
</feature>
<feature type="region of interest" description="Disordered" evidence="1">
    <location>
        <begin position="1"/>
        <end position="37"/>
    </location>
</feature>
<feature type="compositionally biased region" description="Basic residues" evidence="1">
    <location>
        <begin position="1"/>
        <end position="30"/>
    </location>
</feature>
<protein>
    <recommendedName>
        <fullName evidence="2">Large ribosomal subunit protein uL15</fullName>
    </recommendedName>
    <alternativeName>
        <fullName>60S ribosomal protein L27a</fullName>
    </alternativeName>
</protein>
<proteinExistence type="evidence at transcript level"/>